<name>GRM4_MOUSE</name>
<reference key="1">
    <citation type="journal article" date="2004" name="Genome Res.">
        <title>The status, quality, and expansion of the NIH full-length cDNA project: the Mammalian Gene Collection (MGC).</title>
        <authorList>
            <consortium name="The MGC Project Team"/>
        </authorList>
    </citation>
    <scope>NUCLEOTIDE SEQUENCE [LARGE SCALE MRNA] (ISOFORMS 1 AND 2)</scope>
    <source>
        <strain>C57BL/6J</strain>
        <tissue>Brain</tissue>
    </source>
</reference>
<reference key="2">
    <citation type="journal article" date="2003" name="Proc. Natl. Acad. Sci. U.S.A.">
        <title>The G protein-coupled receptor repertoires of human and mouse.</title>
        <authorList>
            <person name="Vassilatis D.K."/>
            <person name="Hohmann J.G."/>
            <person name="Zeng H."/>
            <person name="Li F."/>
            <person name="Ranchalis J.E."/>
            <person name="Mortrud M.T."/>
            <person name="Brown A."/>
            <person name="Rodriguez S.S."/>
            <person name="Weller J.R."/>
            <person name="Wright A.C."/>
            <person name="Bergmann J.E."/>
            <person name="Gaitanaris G.A."/>
        </authorList>
    </citation>
    <scope>NUCLEOTIDE SEQUENCE [LARGE SCALE MRNA] OF 528-642</scope>
</reference>
<reference key="3">
    <citation type="journal article" date="2010" name="Cell">
        <title>A tissue-specific atlas of mouse protein phosphorylation and expression.</title>
        <authorList>
            <person name="Huttlin E.L."/>
            <person name="Jedrychowski M.P."/>
            <person name="Elias J.E."/>
            <person name="Goswami T."/>
            <person name="Rad R."/>
            <person name="Beausoleil S.A."/>
            <person name="Villen J."/>
            <person name="Haas W."/>
            <person name="Sowa M.E."/>
            <person name="Gygi S.P."/>
        </authorList>
    </citation>
    <scope>IDENTIFICATION BY MASS SPECTROMETRY [LARGE SCALE ANALYSIS]</scope>
    <source>
        <tissue>Brain</tissue>
    </source>
</reference>
<organism>
    <name type="scientific">Mus musculus</name>
    <name type="common">Mouse</name>
    <dbReference type="NCBI Taxonomy" id="10090"/>
    <lineage>
        <taxon>Eukaryota</taxon>
        <taxon>Metazoa</taxon>
        <taxon>Chordata</taxon>
        <taxon>Craniata</taxon>
        <taxon>Vertebrata</taxon>
        <taxon>Euteleostomi</taxon>
        <taxon>Mammalia</taxon>
        <taxon>Eutheria</taxon>
        <taxon>Euarchontoglires</taxon>
        <taxon>Glires</taxon>
        <taxon>Rodentia</taxon>
        <taxon>Myomorpha</taxon>
        <taxon>Muroidea</taxon>
        <taxon>Muridae</taxon>
        <taxon>Murinae</taxon>
        <taxon>Mus</taxon>
        <taxon>Mus</taxon>
    </lineage>
</organism>
<proteinExistence type="evidence at protein level"/>
<gene>
    <name type="primary">Grm4</name>
    <name type="synonym">Gprc1d</name>
    <name type="synonym">Mglur4</name>
</gene>
<accession>Q68EF4</accession>
<accession>Q80UC2</accession>
<sequence>MSGKGGWAWWWARLPLCLLLSLYGSWVPSSLGKPKGHPHMNSIRIDGDITLGGLFPVHGRGSEGKACGELKKEKGIHRLEAMLFALDRINNDPDLLPNITLGARILDTCSRDTHALEQSLTFVQALIEKDGTEVRCGSGGPPIITKPERVVGVIGASGSSVSIMVANILRLFKIPQISYASTAPDLSDNSRYDFFSRVVPSDTYQAQAMVDIVRALKWNYVSTLASEGSYGESGVEAFIQKSRENGGVCIAQSVKIPREPKTGEFDKIIKRLLETSNARAIIIFANEDDIRRVLEAARRANQTGHFFWMGSDSWGSKSAPVLRLEEVAEGAVTILPKRTSVRGFDRYFSSRTLDNNRRNIWFAEFWEDNFHCKLSRHALKKGSHIKKCTNRERIGQDSAYEQEGKVQFVIDAVYAMGHALHAMHRDLCPGRVGLCPRMDPVDGTQLLKYIRNVNFSGIAGNPVTFNENGDAPGRYDIYQYQRRNGSAEYKVIGSWTDHLHLRIERMQWPGSGQQLPRSICSLPCQPGERKKTVKGMACCWHCEPCTGYQYQVDRYTCKTCPYDMRPTENRTSCQPIPIVKLEWDSPWAVLPLFLAVVGIAATLFVVVTFVRYNDTPIVKASGRELSYVLLAGIFLCYATTFLMIAEPDLGTCSLRRIFLGLGMSISYAALLTKTNRIYRIFEQGKRSVSAPRFISPASQLAITFVLISLQLLCICVWFVVDPSHSVVDFQDQRTLDPRFARGVLKCDISDLSLICLLGYSMLLMVTCTVYAIKTRGVPETFNEAKPIGFTMYTTCIVWLAFIPIFFGTSQSADKLYIQTTTLTVSVSLSASVSLGMLYMPKVYIILFHPEQNVPKRKRSLKAVVTAATMSNKFTQKGNFRPNGEAKSELCENLEAPALATKQTYVTYTNHAI</sequence>
<comment type="function">
    <text evidence="1">G-protein coupled receptor for glutamate. Ligand binding causes a conformation change that triggers signaling via guanine nucleotide-binding proteins (G proteins) and modulates the activity of down-stream effectors. Signaling inhibits adenylate cyclase activity (By similarity).</text>
</comment>
<comment type="subunit">
    <text evidence="1">Interacts with PICK1.</text>
</comment>
<comment type="subcellular location">
    <subcellularLocation>
        <location evidence="1">Cell membrane</location>
        <topology evidence="1">Multi-pass membrane protein</topology>
    </subcellularLocation>
</comment>
<comment type="alternative products">
    <event type="alternative splicing"/>
    <isoform>
        <id>Q68EF4-1</id>
        <name>1</name>
        <sequence type="displayed"/>
    </isoform>
    <isoform>
        <id>Q68EF4-2</id>
        <name>2</name>
        <sequence type="described" ref="VSP_028517 VSP_028518"/>
    </isoform>
</comment>
<comment type="similarity">
    <text evidence="4">Belongs to the G-protein coupled receptor 3 family.</text>
</comment>
<evidence type="ECO:0000250" key="1"/>
<evidence type="ECO:0000255" key="2"/>
<evidence type="ECO:0000303" key="3">
    <source>
    </source>
</evidence>
<evidence type="ECO:0000305" key="4"/>
<keyword id="KW-0025">Alternative splicing</keyword>
<keyword id="KW-1003">Cell membrane</keyword>
<keyword id="KW-1015">Disulfide bond</keyword>
<keyword id="KW-0297">G-protein coupled receptor</keyword>
<keyword id="KW-0325">Glycoprotein</keyword>
<keyword id="KW-0472">Membrane</keyword>
<keyword id="KW-0675">Receptor</keyword>
<keyword id="KW-1185">Reference proteome</keyword>
<keyword id="KW-0732">Signal</keyword>
<keyword id="KW-0807">Transducer</keyword>
<keyword id="KW-0812">Transmembrane</keyword>
<keyword id="KW-1133">Transmembrane helix</keyword>
<dbReference type="EMBL" id="BC072635">
    <property type="status" value="NOT_ANNOTATED_CDS"/>
    <property type="molecule type" value="mRNA"/>
</dbReference>
<dbReference type="EMBL" id="BC080284">
    <property type="protein sequence ID" value="AAH80284.1"/>
    <property type="molecule type" value="mRNA"/>
</dbReference>
<dbReference type="EMBL" id="AY255558">
    <property type="protein sequence ID" value="AAO85070.1"/>
    <property type="molecule type" value="mRNA"/>
</dbReference>
<dbReference type="CCDS" id="CCDS28563.1">
    <molecule id="Q68EF4-2"/>
</dbReference>
<dbReference type="CCDS" id="CCDS70775.1">
    <molecule id="Q68EF4-1"/>
</dbReference>
<dbReference type="RefSeq" id="NP_001013403.1">
    <property type="nucleotide sequence ID" value="NM_001013385.2"/>
</dbReference>
<dbReference type="SMR" id="Q68EF4"/>
<dbReference type="BioGRID" id="234582">
    <property type="interactions" value="5"/>
</dbReference>
<dbReference type="DIP" id="DIP-49002N"/>
<dbReference type="FunCoup" id="Q68EF4">
    <property type="interactions" value="660"/>
</dbReference>
<dbReference type="IntAct" id="Q68EF4">
    <property type="interactions" value="2"/>
</dbReference>
<dbReference type="STRING" id="10090.ENSMUSP00000113819"/>
<dbReference type="BindingDB" id="Q68EF4"/>
<dbReference type="ChEMBL" id="CHEMBL4105794"/>
<dbReference type="GlyConnect" id="2509">
    <property type="glycosylation" value="2 N-Linked glycans (1 site)"/>
</dbReference>
<dbReference type="GlyCosmos" id="Q68EF4">
    <property type="glycosylation" value="3 sites, 2 glycans"/>
</dbReference>
<dbReference type="GlyGen" id="Q68EF4">
    <property type="glycosylation" value="5 sites, 5 N-linked glycans (3 sites), 1 O-linked glycan (1 site)"/>
</dbReference>
<dbReference type="iPTMnet" id="Q68EF4"/>
<dbReference type="PhosphoSitePlus" id="Q68EF4"/>
<dbReference type="PaxDb" id="10090-ENSMUSP00000112578"/>
<dbReference type="PeptideAtlas" id="Q68EF4"/>
<dbReference type="ProteomicsDB" id="271303">
    <molecule id="Q68EF4-1"/>
</dbReference>
<dbReference type="ProteomicsDB" id="271304">
    <molecule id="Q68EF4-2"/>
</dbReference>
<dbReference type="DNASU" id="268934"/>
<dbReference type="GeneID" id="268934"/>
<dbReference type="KEGG" id="mmu:268934"/>
<dbReference type="AGR" id="MGI:1351341"/>
<dbReference type="CTD" id="2914"/>
<dbReference type="MGI" id="MGI:1351341">
    <property type="gene designation" value="Grm4"/>
</dbReference>
<dbReference type="eggNOG" id="KOG1056">
    <property type="taxonomic scope" value="Eukaryota"/>
</dbReference>
<dbReference type="InParanoid" id="Q68EF4"/>
<dbReference type="OrthoDB" id="425344at2759"/>
<dbReference type="PhylomeDB" id="Q68EF4"/>
<dbReference type="Reactome" id="R-MMU-418594">
    <property type="pathway name" value="G alpha (i) signalling events"/>
</dbReference>
<dbReference type="Reactome" id="R-MMU-420499">
    <property type="pathway name" value="Class C/3 (Metabotropic glutamate/pheromone receptors)"/>
</dbReference>
<dbReference type="BioGRID-ORCS" id="268934">
    <property type="hits" value="2 hits in 80 CRISPR screens"/>
</dbReference>
<dbReference type="ChiTaRS" id="Grm4">
    <property type="organism name" value="mouse"/>
</dbReference>
<dbReference type="PRO" id="PR:Q68EF4"/>
<dbReference type="Proteomes" id="UP000000589">
    <property type="component" value="Unplaced"/>
</dbReference>
<dbReference type="RNAct" id="Q68EF4">
    <property type="molecule type" value="protein"/>
</dbReference>
<dbReference type="GO" id="GO:0150048">
    <property type="term" value="C:cerebellar granule cell to Purkinje cell synapse"/>
    <property type="evidence" value="ECO:0000314"/>
    <property type="project" value="SynGO"/>
</dbReference>
<dbReference type="GO" id="GO:0098978">
    <property type="term" value="C:glutamatergic synapse"/>
    <property type="evidence" value="ECO:0000314"/>
    <property type="project" value="SynGO"/>
</dbReference>
<dbReference type="GO" id="GO:0043005">
    <property type="term" value="C:neuron projection"/>
    <property type="evidence" value="ECO:0000314"/>
    <property type="project" value="BHF-UCL"/>
</dbReference>
<dbReference type="GO" id="GO:0098688">
    <property type="term" value="C:parallel fiber to Purkinje cell synapse"/>
    <property type="evidence" value="ECO:0000314"/>
    <property type="project" value="SynGO"/>
</dbReference>
<dbReference type="GO" id="GO:0048787">
    <property type="term" value="C:presynaptic active zone membrane"/>
    <property type="evidence" value="ECO:0000314"/>
    <property type="project" value="SynGO"/>
</dbReference>
<dbReference type="GO" id="GO:0004930">
    <property type="term" value="F:G protein-coupled receptor activity"/>
    <property type="evidence" value="ECO:0000250"/>
    <property type="project" value="UniProtKB"/>
</dbReference>
<dbReference type="GO" id="GO:0008066">
    <property type="term" value="F:glutamate receptor activity"/>
    <property type="evidence" value="ECO:0000250"/>
    <property type="project" value="UniProtKB"/>
</dbReference>
<dbReference type="GO" id="GO:0001642">
    <property type="term" value="F:group III metabotropic glutamate receptor activity"/>
    <property type="evidence" value="ECO:0000304"/>
    <property type="project" value="MGI"/>
</dbReference>
<dbReference type="GO" id="GO:0007196">
    <property type="term" value="P:adenylate cyclase-inhibiting G protein-coupled glutamate receptor signaling pathway"/>
    <property type="evidence" value="ECO:0000250"/>
    <property type="project" value="UniProtKB"/>
</dbReference>
<dbReference type="GO" id="GO:0007268">
    <property type="term" value="P:chemical synaptic transmission"/>
    <property type="evidence" value="ECO:0000315"/>
    <property type="project" value="MGI"/>
</dbReference>
<dbReference type="GO" id="GO:0007612">
    <property type="term" value="P:learning"/>
    <property type="evidence" value="ECO:0000315"/>
    <property type="project" value="MGI"/>
</dbReference>
<dbReference type="GO" id="GO:0099171">
    <property type="term" value="P:presynaptic modulation of chemical synaptic transmission"/>
    <property type="evidence" value="ECO:0000314"/>
    <property type="project" value="SynGO"/>
</dbReference>
<dbReference type="CDD" id="cd15452">
    <property type="entry name" value="7tmC_mGluR4"/>
    <property type="match status" value="1"/>
</dbReference>
<dbReference type="CDD" id="cd06376">
    <property type="entry name" value="PBP1_mGluR_groupIII"/>
    <property type="match status" value="1"/>
</dbReference>
<dbReference type="FunFam" id="3.40.50.2300:FF:000196">
    <property type="entry name" value="Glutamate metabotropic receptor 7"/>
    <property type="match status" value="1"/>
</dbReference>
<dbReference type="FunFam" id="3.40.50.2300:FF:000009">
    <property type="entry name" value="Glutamate receptor, metabotropic 4"/>
    <property type="match status" value="1"/>
</dbReference>
<dbReference type="FunFam" id="2.10.50.30:FF:000001">
    <property type="entry name" value="metabotropic glutamate receptor 1"/>
    <property type="match status" value="1"/>
</dbReference>
<dbReference type="FunFam" id="3.40.50.2300:FF:000176">
    <property type="entry name" value="metabotropic glutamate receptor 7"/>
    <property type="match status" value="1"/>
</dbReference>
<dbReference type="Gene3D" id="3.40.50.2300">
    <property type="match status" value="2"/>
</dbReference>
<dbReference type="Gene3D" id="2.10.50.30">
    <property type="entry name" value="GPCR, family 3, nine cysteines domain"/>
    <property type="match status" value="1"/>
</dbReference>
<dbReference type="InterPro" id="IPR001828">
    <property type="entry name" value="ANF_lig-bd_rcpt"/>
</dbReference>
<dbReference type="InterPro" id="IPR000337">
    <property type="entry name" value="GPCR_3"/>
</dbReference>
<dbReference type="InterPro" id="IPR011500">
    <property type="entry name" value="GPCR_3_9-Cys_dom"/>
</dbReference>
<dbReference type="InterPro" id="IPR038550">
    <property type="entry name" value="GPCR_3_9-Cys_sf"/>
</dbReference>
<dbReference type="InterPro" id="IPR017978">
    <property type="entry name" value="GPCR_3_C"/>
</dbReference>
<dbReference type="InterPro" id="IPR017979">
    <property type="entry name" value="GPCR_3_CS"/>
</dbReference>
<dbReference type="InterPro" id="IPR001786">
    <property type="entry name" value="GPCR_3_mGluR4"/>
</dbReference>
<dbReference type="InterPro" id="IPR000162">
    <property type="entry name" value="GPCR_3_mtglu_rcpt"/>
</dbReference>
<dbReference type="InterPro" id="IPR050726">
    <property type="entry name" value="mGluR"/>
</dbReference>
<dbReference type="InterPro" id="IPR028082">
    <property type="entry name" value="Peripla_BP_I"/>
</dbReference>
<dbReference type="PANTHER" id="PTHR24060">
    <property type="entry name" value="METABOTROPIC GLUTAMATE RECEPTOR"/>
    <property type="match status" value="1"/>
</dbReference>
<dbReference type="Pfam" id="PF00003">
    <property type="entry name" value="7tm_3"/>
    <property type="match status" value="1"/>
</dbReference>
<dbReference type="Pfam" id="PF01094">
    <property type="entry name" value="ANF_receptor"/>
    <property type="match status" value="1"/>
</dbReference>
<dbReference type="Pfam" id="PF07562">
    <property type="entry name" value="NCD3G"/>
    <property type="match status" value="1"/>
</dbReference>
<dbReference type="PRINTS" id="PR00248">
    <property type="entry name" value="GPCRMGR"/>
</dbReference>
<dbReference type="PRINTS" id="PR01054">
    <property type="entry name" value="MTABOTROPC4R"/>
</dbReference>
<dbReference type="PRINTS" id="PR00593">
    <property type="entry name" value="MTABOTROPICR"/>
</dbReference>
<dbReference type="SUPFAM" id="SSF53822">
    <property type="entry name" value="Periplasmic binding protein-like I"/>
    <property type="match status" value="1"/>
</dbReference>
<dbReference type="PROSITE" id="PS00979">
    <property type="entry name" value="G_PROTEIN_RECEP_F3_1"/>
    <property type="match status" value="1"/>
</dbReference>
<dbReference type="PROSITE" id="PS00980">
    <property type="entry name" value="G_PROTEIN_RECEP_F3_2"/>
    <property type="match status" value="1"/>
</dbReference>
<dbReference type="PROSITE" id="PS00981">
    <property type="entry name" value="G_PROTEIN_RECEP_F3_3"/>
    <property type="match status" value="1"/>
</dbReference>
<dbReference type="PROSITE" id="PS50259">
    <property type="entry name" value="G_PROTEIN_RECEP_F3_4"/>
    <property type="match status" value="1"/>
</dbReference>
<feature type="signal peptide" evidence="2">
    <location>
        <begin position="1"/>
        <end position="32"/>
    </location>
</feature>
<feature type="chain" id="PRO_0000306852" description="Metabotropic glutamate receptor 4">
    <location>
        <begin position="33"/>
        <end position="912"/>
    </location>
</feature>
<feature type="topological domain" description="Extracellular" evidence="2">
    <location>
        <begin position="33"/>
        <end position="586"/>
    </location>
</feature>
<feature type="transmembrane region" description="Helical; Name=1" evidence="2">
    <location>
        <begin position="587"/>
        <end position="607"/>
    </location>
</feature>
<feature type="topological domain" description="Cytoplasmic" evidence="2">
    <location>
        <begin position="608"/>
        <end position="624"/>
    </location>
</feature>
<feature type="transmembrane region" description="Helical; Name=2" evidence="2">
    <location>
        <begin position="625"/>
        <end position="645"/>
    </location>
</feature>
<feature type="topological domain" description="Extracellular" evidence="2">
    <location>
        <begin position="646"/>
        <end position="653"/>
    </location>
</feature>
<feature type="transmembrane region" description="Helical; Name=3" evidence="2">
    <location>
        <begin position="654"/>
        <end position="671"/>
    </location>
</feature>
<feature type="topological domain" description="Cytoplasmic" evidence="2">
    <location>
        <begin position="672"/>
        <end position="699"/>
    </location>
</feature>
<feature type="transmembrane region" description="Helical; Name=4" evidence="2">
    <location>
        <begin position="700"/>
        <end position="720"/>
    </location>
</feature>
<feature type="topological domain" description="Extracellular" evidence="2">
    <location>
        <begin position="721"/>
        <end position="751"/>
    </location>
</feature>
<feature type="transmembrane region" description="Helical; Name=5" evidence="2">
    <location>
        <begin position="752"/>
        <end position="772"/>
    </location>
</feature>
<feature type="topological domain" description="Cytoplasmic" evidence="2">
    <location>
        <begin position="773"/>
        <end position="786"/>
    </location>
</feature>
<feature type="transmembrane region" description="Helical; Name=6" evidence="2">
    <location>
        <begin position="787"/>
        <end position="807"/>
    </location>
</feature>
<feature type="topological domain" description="Extracellular" evidence="2">
    <location>
        <begin position="808"/>
        <end position="826"/>
    </location>
</feature>
<feature type="transmembrane region" description="Helical; Name=7" evidence="2">
    <location>
        <begin position="827"/>
        <end position="847"/>
    </location>
</feature>
<feature type="topological domain" description="Cytoplasmic" evidence="2">
    <location>
        <begin position="848"/>
        <end position="912"/>
    </location>
</feature>
<feature type="binding site" evidence="1">
    <location>
        <position position="159"/>
    </location>
    <ligand>
        <name>L-glutamate</name>
        <dbReference type="ChEBI" id="CHEBI:29985"/>
    </ligand>
</feature>
<feature type="binding site" evidence="1">
    <location>
        <begin position="180"/>
        <end position="182"/>
    </location>
    <ligand>
        <name>L-glutamate</name>
        <dbReference type="ChEBI" id="CHEBI:29985"/>
    </ligand>
</feature>
<feature type="binding site" evidence="1">
    <location>
        <position position="230"/>
    </location>
    <ligand>
        <name>L-glutamate</name>
        <dbReference type="ChEBI" id="CHEBI:29985"/>
    </ligand>
</feature>
<feature type="binding site" evidence="1">
    <location>
        <position position="312"/>
    </location>
    <ligand>
        <name>L-glutamate</name>
        <dbReference type="ChEBI" id="CHEBI:29985"/>
    </ligand>
</feature>
<feature type="binding site" evidence="1">
    <location>
        <position position="405"/>
    </location>
    <ligand>
        <name>L-glutamate</name>
        <dbReference type="ChEBI" id="CHEBI:29985"/>
    </ligand>
</feature>
<feature type="glycosylation site" description="N-linked (GlcNAc...) asparagine" evidence="2">
    <location>
        <position position="98"/>
    </location>
</feature>
<feature type="glycosylation site" description="N-linked (GlcNAc...) asparagine" evidence="2">
    <location>
        <position position="301"/>
    </location>
</feature>
<feature type="disulfide bond" evidence="1">
    <location>
        <begin position="67"/>
        <end position="109"/>
    </location>
</feature>
<feature type="disulfide bond" evidence="1">
    <location>
        <begin position="249"/>
        <end position="538"/>
    </location>
</feature>
<feature type="disulfide bond" evidence="1">
    <location>
        <begin position="372"/>
        <end position="388"/>
    </location>
</feature>
<feature type="disulfide bond" evidence="1">
    <location>
        <begin position="428"/>
        <end position="435"/>
    </location>
</feature>
<feature type="disulfide bond" evidence="1">
    <location>
        <begin position="520"/>
        <end position="539"/>
    </location>
</feature>
<feature type="disulfide bond" evidence="1">
    <location>
        <begin position="524"/>
        <end position="542"/>
    </location>
</feature>
<feature type="disulfide bond" evidence="1">
    <location>
        <begin position="545"/>
        <end position="557"/>
    </location>
</feature>
<feature type="disulfide bond" evidence="1">
    <location>
        <begin position="560"/>
        <end position="573"/>
    </location>
</feature>
<feature type="splice variant" id="VSP_028517" description="In isoform 2." evidence="3">
    <original>LYIQTTTLTVSVSLSASV</original>
    <variation>VTSEALPVEFSPPLLAHN</variation>
    <location>
        <begin position="815"/>
        <end position="832"/>
    </location>
</feature>
<feature type="splice variant" id="VSP_028518" description="In isoform 2." evidence="3">
    <location>
        <begin position="833"/>
        <end position="912"/>
    </location>
</feature>
<feature type="sequence conflict" description="In Ref. 1; AAH80284." evidence="4" ref="1">
    <original>C</original>
    <variation>G</variation>
    <location>
        <position position="713"/>
    </location>
</feature>
<protein>
    <recommendedName>
        <fullName>Metabotropic glutamate receptor 4</fullName>
        <shortName>mGluR4</shortName>
    </recommendedName>
</protein>